<organism>
    <name type="scientific">Methanocaldococcus jannaschii (strain ATCC 43067 / DSM 2661 / JAL-1 / JCM 10045 / NBRC 100440)</name>
    <name type="common">Methanococcus jannaschii</name>
    <dbReference type="NCBI Taxonomy" id="243232"/>
    <lineage>
        <taxon>Archaea</taxon>
        <taxon>Methanobacteriati</taxon>
        <taxon>Methanobacteriota</taxon>
        <taxon>Methanomada group</taxon>
        <taxon>Methanococci</taxon>
        <taxon>Methanococcales</taxon>
        <taxon>Methanocaldococcaceae</taxon>
        <taxon>Methanocaldococcus</taxon>
    </lineage>
</organism>
<dbReference type="EMBL" id="L77117">
    <property type="protein sequence ID" value="AAB99570.1"/>
    <property type="molecule type" value="Genomic_DNA"/>
</dbReference>
<dbReference type="PIR" id="E64492">
    <property type="entry name" value="E64492"/>
</dbReference>
<dbReference type="STRING" id="243232.MJ_1542"/>
<dbReference type="PaxDb" id="243232-MJ_1542"/>
<dbReference type="EnsemblBacteria" id="AAB99570">
    <property type="protein sequence ID" value="AAB99570"/>
    <property type="gene ID" value="MJ_1542"/>
</dbReference>
<dbReference type="KEGG" id="mja:MJ_1542"/>
<dbReference type="eggNOG" id="arCOG03240">
    <property type="taxonomic scope" value="Archaea"/>
</dbReference>
<dbReference type="HOGENOM" id="CLU_367870_0_0_2"/>
<dbReference type="InParanoid" id="Q58937"/>
<dbReference type="OrthoDB" id="25344at2157"/>
<dbReference type="Proteomes" id="UP000000805">
    <property type="component" value="Chromosome"/>
</dbReference>
<dbReference type="GO" id="GO:0005524">
    <property type="term" value="F:ATP binding"/>
    <property type="evidence" value="ECO:0007669"/>
    <property type="project" value="UniProtKB-KW"/>
</dbReference>
<dbReference type="GO" id="GO:0016887">
    <property type="term" value="F:ATP hydrolysis activity"/>
    <property type="evidence" value="ECO:0007669"/>
    <property type="project" value="InterPro"/>
</dbReference>
<dbReference type="CDD" id="cd00267">
    <property type="entry name" value="ABC_ATPase"/>
    <property type="match status" value="1"/>
</dbReference>
<dbReference type="Gene3D" id="3.40.50.300">
    <property type="entry name" value="P-loop containing nucleotide triphosphate hydrolases"/>
    <property type="match status" value="2"/>
</dbReference>
<dbReference type="InterPro" id="IPR003959">
    <property type="entry name" value="ATPase_AAA_core"/>
</dbReference>
<dbReference type="InterPro" id="IPR051396">
    <property type="entry name" value="Bact_Antivir_Def_Nuclease"/>
</dbReference>
<dbReference type="InterPro" id="IPR027417">
    <property type="entry name" value="P-loop_NTPase"/>
</dbReference>
<dbReference type="PANTHER" id="PTHR43581">
    <property type="entry name" value="ATP/GTP PHOSPHATASE"/>
    <property type="match status" value="1"/>
</dbReference>
<dbReference type="PANTHER" id="PTHR43581:SF4">
    <property type="entry name" value="ATP_GTP PHOSPHATASE"/>
    <property type="match status" value="1"/>
</dbReference>
<dbReference type="Pfam" id="PF13304">
    <property type="entry name" value="AAA_21"/>
    <property type="match status" value="1"/>
</dbReference>
<dbReference type="SUPFAM" id="SSF52540">
    <property type="entry name" value="P-loop containing nucleoside triphosphate hydrolases"/>
    <property type="match status" value="1"/>
</dbReference>
<feature type="chain" id="PRO_0000107399" description="Uncharacterized protein MJ1542">
    <location>
        <begin position="1"/>
        <end position="808"/>
    </location>
</feature>
<feature type="binding site" evidence="1">
    <location>
        <begin position="35"/>
        <end position="42"/>
    </location>
    <ligand>
        <name>ATP</name>
        <dbReference type="ChEBI" id="CHEBI:30616"/>
    </ligand>
</feature>
<protein>
    <recommendedName>
        <fullName>Uncharacterized protein MJ1542</fullName>
    </recommendedName>
</protein>
<name>Y1542_METJA</name>
<reference key="1">
    <citation type="journal article" date="1996" name="Science">
        <title>Complete genome sequence of the methanogenic archaeon, Methanococcus jannaschii.</title>
        <authorList>
            <person name="Bult C.J."/>
            <person name="White O."/>
            <person name="Olsen G.J."/>
            <person name="Zhou L."/>
            <person name="Fleischmann R.D."/>
            <person name="Sutton G.G."/>
            <person name="Blake J.A."/>
            <person name="FitzGerald L.M."/>
            <person name="Clayton R.A."/>
            <person name="Gocayne J.D."/>
            <person name="Kerlavage A.R."/>
            <person name="Dougherty B.A."/>
            <person name="Tomb J.-F."/>
            <person name="Adams M.D."/>
            <person name="Reich C.I."/>
            <person name="Overbeek R."/>
            <person name="Kirkness E.F."/>
            <person name="Weinstock K.G."/>
            <person name="Merrick J.M."/>
            <person name="Glodek A."/>
            <person name="Scott J.L."/>
            <person name="Geoghagen N.S.M."/>
            <person name="Weidman J.F."/>
            <person name="Fuhrmann J.L."/>
            <person name="Nguyen D."/>
            <person name="Utterback T.R."/>
            <person name="Kelley J.M."/>
            <person name="Peterson J.D."/>
            <person name="Sadow P.W."/>
            <person name="Hanna M.C."/>
            <person name="Cotton M.D."/>
            <person name="Roberts K.M."/>
            <person name="Hurst M.A."/>
            <person name="Kaine B.P."/>
            <person name="Borodovsky M."/>
            <person name="Klenk H.-P."/>
            <person name="Fraser C.M."/>
            <person name="Smith H.O."/>
            <person name="Woese C.R."/>
            <person name="Venter J.C."/>
        </authorList>
    </citation>
    <scope>NUCLEOTIDE SEQUENCE [LARGE SCALE GENOMIC DNA]</scope>
    <source>
        <strain>ATCC 43067 / DSM 2661 / JAL-1 / JCM 10045 / NBRC 100440</strain>
    </source>
</reference>
<gene>
    <name type="ordered locus">MJ1542</name>
</gene>
<sequence length="808" mass="95564">MVKFMKIKSIAAKNLLSFDDFKITFEDGDVVTIFGPNNVGKTNLFRVLKLLRNIINEKISAVDLEIYLHNKNLKAAKIEVDVIFDKSDKEVIAKFLKIFFKINAPDLIRLCNNLKLNIINSIIDYFSAGSYIWECSELRCYRPYFMLRLRSLEEDIEKIKIYLKERELSEITPDLIDHSKVIHELDRNVEIIEVTNDLKNIITSSVNALITIYEKNEKLFFSTLIDGKENITTRIGDGNIENIVEISMKDFTKDIEKYEDCFKRLTMDKNILRAFVVLLALDKLLANKMSIYVKKVLEYSKENPWDKEIIEDLKYIVRFCGFDYRDIYEISDISLNDILLKIYENSLIFYEDYLPNEGKVMIPDYMIVELLAGLKNNSLEKNVKSKILELFKTSTTKDDLYLGILSMPSEKWIPSYLFYLKNNANLKLRKRYMKIKEMFEYIFNSGSLSFDVILANNKPDIVVYSEDIEIPLNMVGLGVKKILEILTLVFGYESKVILLDTPFNQLYPKYQKRFSKILKDTENIDSQVFIILHSPYFINNENIFNTFRFYKPKKSTKYICIGSIIKDLEKTFGTVILDRTTRKILLSDAVILLSSALRDIPLFDLAEYEDIPIDEYNIEVIRPQNTLSFGKYYALLQYTSIPYILMLRSWILYNLYEEIKDGEGKVRYKLLEKGKYHKIVEERLNFFKNRHPFWISKEEFDKVINIYIKTLEAHREKLIELGYIYLSSKEEVVKYCIEPLRKQLEDILRKKLFIFTVPTDFIIEPQDLKNIQIEKDKYIVHNYIGYRKDVLKEFKEFFDYFVKFHNLQ</sequence>
<accession>Q58937</accession>
<proteinExistence type="predicted"/>
<keyword id="KW-0067">ATP-binding</keyword>
<keyword id="KW-0547">Nucleotide-binding</keyword>
<keyword id="KW-1185">Reference proteome</keyword>
<evidence type="ECO:0000255" key="1"/>